<protein>
    <recommendedName>
        <fullName evidence="1">Pantothenate synthetase</fullName>
        <shortName evidence="1">PS</shortName>
        <ecNumber evidence="1">6.3.2.1</ecNumber>
    </recommendedName>
    <alternativeName>
        <fullName evidence="1">Pantoate--beta-alanine ligase</fullName>
    </alternativeName>
    <alternativeName>
        <fullName evidence="1">Pantoate-activating enzyme</fullName>
    </alternativeName>
</protein>
<keyword id="KW-0067">ATP-binding</keyword>
<keyword id="KW-0963">Cytoplasm</keyword>
<keyword id="KW-0436">Ligase</keyword>
<keyword id="KW-0547">Nucleotide-binding</keyword>
<keyword id="KW-0566">Pantothenate biosynthesis</keyword>
<keyword id="KW-1185">Reference proteome</keyword>
<proteinExistence type="inferred from homology"/>
<gene>
    <name evidence="1" type="primary">panC</name>
    <name type="ordered locus">BMA0701</name>
</gene>
<reference key="1">
    <citation type="journal article" date="2004" name="Proc. Natl. Acad. Sci. U.S.A.">
        <title>Structural flexibility in the Burkholderia mallei genome.</title>
        <authorList>
            <person name="Nierman W.C."/>
            <person name="DeShazer D."/>
            <person name="Kim H.S."/>
            <person name="Tettelin H."/>
            <person name="Nelson K.E."/>
            <person name="Feldblyum T.V."/>
            <person name="Ulrich R.L."/>
            <person name="Ronning C.M."/>
            <person name="Brinkac L.M."/>
            <person name="Daugherty S.C."/>
            <person name="Davidsen T.D."/>
            <person name="DeBoy R.T."/>
            <person name="Dimitrov G."/>
            <person name="Dodson R.J."/>
            <person name="Durkin A.S."/>
            <person name="Gwinn M.L."/>
            <person name="Haft D.H."/>
            <person name="Khouri H.M."/>
            <person name="Kolonay J.F."/>
            <person name="Madupu R."/>
            <person name="Mohammoud Y."/>
            <person name="Nelson W.C."/>
            <person name="Radune D."/>
            <person name="Romero C.M."/>
            <person name="Sarria S."/>
            <person name="Selengut J."/>
            <person name="Shamblin C."/>
            <person name="Sullivan S.A."/>
            <person name="White O."/>
            <person name="Yu Y."/>
            <person name="Zafar N."/>
            <person name="Zhou L."/>
            <person name="Fraser C.M."/>
        </authorList>
    </citation>
    <scope>NUCLEOTIDE SEQUENCE [LARGE SCALE GENOMIC DNA]</scope>
    <source>
        <strain>ATCC 23344</strain>
    </source>
</reference>
<feature type="chain" id="PRO_0000128214" description="Pantothenate synthetase">
    <location>
        <begin position="1"/>
        <end position="279"/>
    </location>
</feature>
<feature type="active site" description="Proton donor" evidence="1">
    <location>
        <position position="33"/>
    </location>
</feature>
<feature type="binding site" evidence="1">
    <location>
        <begin position="26"/>
        <end position="33"/>
    </location>
    <ligand>
        <name>ATP</name>
        <dbReference type="ChEBI" id="CHEBI:30616"/>
    </ligand>
</feature>
<feature type="binding site" evidence="1">
    <location>
        <position position="57"/>
    </location>
    <ligand>
        <name>(R)-pantoate</name>
        <dbReference type="ChEBI" id="CHEBI:15980"/>
    </ligand>
</feature>
<feature type="binding site" evidence="1">
    <location>
        <position position="57"/>
    </location>
    <ligand>
        <name>beta-alanine</name>
        <dbReference type="ChEBI" id="CHEBI:57966"/>
    </ligand>
</feature>
<feature type="binding site" evidence="1">
    <location>
        <begin position="144"/>
        <end position="147"/>
    </location>
    <ligand>
        <name>ATP</name>
        <dbReference type="ChEBI" id="CHEBI:30616"/>
    </ligand>
</feature>
<feature type="binding site" evidence="1">
    <location>
        <position position="150"/>
    </location>
    <ligand>
        <name>(R)-pantoate</name>
        <dbReference type="ChEBI" id="CHEBI:15980"/>
    </ligand>
</feature>
<feature type="binding site" evidence="1">
    <location>
        <position position="173"/>
    </location>
    <ligand>
        <name>ATP</name>
        <dbReference type="ChEBI" id="CHEBI:30616"/>
    </ligand>
</feature>
<feature type="binding site" evidence="1">
    <location>
        <begin position="181"/>
        <end position="184"/>
    </location>
    <ligand>
        <name>ATP</name>
        <dbReference type="ChEBI" id="CHEBI:30616"/>
    </ligand>
</feature>
<name>PANC_BURMA</name>
<accession>Q62LE7</accession>
<sequence>MKVISSIQELRDQLRGQNRTAFVPTMGNLHDGHLSLMRLARQHGDPVVASIFVNRLQFGPNEDFDQYPRTLQDDIEKLQKENVYVLFAPTERDMYPEPQEYRVQPPHDLGDILEGEFRPGFFTGVCTVVTKLMACVQPRVAVFGKKDYQQLMIVRRMCQQLALPVEIIAAETVRDADGLALSSRNRYLSEAERAEAPELAKTLAQVRSAVLGGERDLAAIEQRALAHLAARGWKPDYVSIRRRANLVAPSAAHIEAGEPLVVLTAAKLGATRLIDNLEI</sequence>
<dbReference type="EC" id="6.3.2.1" evidence="1"/>
<dbReference type="EMBL" id="CP000010">
    <property type="protein sequence ID" value="AAU49242.1"/>
    <property type="molecule type" value="Genomic_DNA"/>
</dbReference>
<dbReference type="RefSeq" id="WP_004192993.1">
    <property type="nucleotide sequence ID" value="NC_006348.1"/>
</dbReference>
<dbReference type="RefSeq" id="YP_102472.1">
    <property type="nucleotide sequence ID" value="NC_006348.1"/>
</dbReference>
<dbReference type="SMR" id="Q62LE7"/>
<dbReference type="GeneID" id="93059491"/>
<dbReference type="KEGG" id="bma:BMA0701"/>
<dbReference type="PATRIC" id="fig|243160.12.peg.722"/>
<dbReference type="eggNOG" id="COG0414">
    <property type="taxonomic scope" value="Bacteria"/>
</dbReference>
<dbReference type="HOGENOM" id="CLU_047148_0_0_4"/>
<dbReference type="UniPathway" id="UPA00028">
    <property type="reaction ID" value="UER00005"/>
</dbReference>
<dbReference type="Proteomes" id="UP000006693">
    <property type="component" value="Chromosome 1"/>
</dbReference>
<dbReference type="GO" id="GO:0005829">
    <property type="term" value="C:cytosol"/>
    <property type="evidence" value="ECO:0007669"/>
    <property type="project" value="TreeGrafter"/>
</dbReference>
<dbReference type="GO" id="GO:0005524">
    <property type="term" value="F:ATP binding"/>
    <property type="evidence" value="ECO:0007669"/>
    <property type="project" value="UniProtKB-KW"/>
</dbReference>
<dbReference type="GO" id="GO:0004592">
    <property type="term" value="F:pantoate-beta-alanine ligase activity"/>
    <property type="evidence" value="ECO:0007669"/>
    <property type="project" value="UniProtKB-UniRule"/>
</dbReference>
<dbReference type="GO" id="GO:0015940">
    <property type="term" value="P:pantothenate biosynthetic process"/>
    <property type="evidence" value="ECO:0007669"/>
    <property type="project" value="UniProtKB-UniRule"/>
</dbReference>
<dbReference type="CDD" id="cd00560">
    <property type="entry name" value="PanC"/>
    <property type="match status" value="1"/>
</dbReference>
<dbReference type="Gene3D" id="3.40.50.620">
    <property type="entry name" value="HUPs"/>
    <property type="match status" value="1"/>
</dbReference>
<dbReference type="Gene3D" id="3.30.1300.10">
    <property type="entry name" value="Pantoate-beta-alanine ligase, C-terminal domain"/>
    <property type="match status" value="1"/>
</dbReference>
<dbReference type="HAMAP" id="MF_00158">
    <property type="entry name" value="PanC"/>
    <property type="match status" value="1"/>
</dbReference>
<dbReference type="InterPro" id="IPR004821">
    <property type="entry name" value="Cyt_trans-like"/>
</dbReference>
<dbReference type="InterPro" id="IPR003721">
    <property type="entry name" value="Pantoate_ligase"/>
</dbReference>
<dbReference type="InterPro" id="IPR042176">
    <property type="entry name" value="Pantoate_ligase_C"/>
</dbReference>
<dbReference type="InterPro" id="IPR014729">
    <property type="entry name" value="Rossmann-like_a/b/a_fold"/>
</dbReference>
<dbReference type="NCBIfam" id="TIGR00125">
    <property type="entry name" value="cyt_tran_rel"/>
    <property type="match status" value="1"/>
</dbReference>
<dbReference type="NCBIfam" id="TIGR00018">
    <property type="entry name" value="panC"/>
    <property type="match status" value="1"/>
</dbReference>
<dbReference type="PANTHER" id="PTHR21299">
    <property type="entry name" value="CYTIDYLATE KINASE/PANTOATE-BETA-ALANINE LIGASE"/>
    <property type="match status" value="1"/>
</dbReference>
<dbReference type="PANTHER" id="PTHR21299:SF1">
    <property type="entry name" value="PANTOATE--BETA-ALANINE LIGASE"/>
    <property type="match status" value="1"/>
</dbReference>
<dbReference type="Pfam" id="PF02569">
    <property type="entry name" value="Pantoate_ligase"/>
    <property type="match status" value="1"/>
</dbReference>
<dbReference type="SUPFAM" id="SSF52374">
    <property type="entry name" value="Nucleotidylyl transferase"/>
    <property type="match status" value="1"/>
</dbReference>
<comment type="function">
    <text evidence="1">Catalyzes the condensation of pantoate with beta-alanine in an ATP-dependent reaction via a pantoyl-adenylate intermediate.</text>
</comment>
<comment type="catalytic activity">
    <reaction evidence="1">
        <text>(R)-pantoate + beta-alanine + ATP = (R)-pantothenate + AMP + diphosphate + H(+)</text>
        <dbReference type="Rhea" id="RHEA:10912"/>
        <dbReference type="ChEBI" id="CHEBI:15378"/>
        <dbReference type="ChEBI" id="CHEBI:15980"/>
        <dbReference type="ChEBI" id="CHEBI:29032"/>
        <dbReference type="ChEBI" id="CHEBI:30616"/>
        <dbReference type="ChEBI" id="CHEBI:33019"/>
        <dbReference type="ChEBI" id="CHEBI:57966"/>
        <dbReference type="ChEBI" id="CHEBI:456215"/>
        <dbReference type="EC" id="6.3.2.1"/>
    </reaction>
</comment>
<comment type="pathway">
    <text evidence="1">Cofactor biosynthesis; (R)-pantothenate biosynthesis; (R)-pantothenate from (R)-pantoate and beta-alanine: step 1/1.</text>
</comment>
<comment type="subunit">
    <text evidence="1">Homodimer.</text>
</comment>
<comment type="subcellular location">
    <subcellularLocation>
        <location evidence="1">Cytoplasm</location>
    </subcellularLocation>
</comment>
<comment type="miscellaneous">
    <text evidence="1">The reaction proceeds by a bi uni uni bi ping pong mechanism.</text>
</comment>
<comment type="similarity">
    <text evidence="1">Belongs to the pantothenate synthetase family.</text>
</comment>
<evidence type="ECO:0000255" key="1">
    <source>
        <dbReference type="HAMAP-Rule" id="MF_00158"/>
    </source>
</evidence>
<organism>
    <name type="scientific">Burkholderia mallei (strain ATCC 23344)</name>
    <dbReference type="NCBI Taxonomy" id="243160"/>
    <lineage>
        <taxon>Bacteria</taxon>
        <taxon>Pseudomonadati</taxon>
        <taxon>Pseudomonadota</taxon>
        <taxon>Betaproteobacteria</taxon>
        <taxon>Burkholderiales</taxon>
        <taxon>Burkholderiaceae</taxon>
        <taxon>Burkholderia</taxon>
        <taxon>pseudomallei group</taxon>
    </lineage>
</organism>